<gene>
    <name evidence="1" type="primary">ureC</name>
    <name type="ordered locus">FRAAL1447</name>
</gene>
<evidence type="ECO:0000255" key="1">
    <source>
        <dbReference type="HAMAP-Rule" id="MF_01953"/>
    </source>
</evidence>
<proteinExistence type="inferred from homology"/>
<keyword id="KW-0963">Cytoplasm</keyword>
<keyword id="KW-0378">Hydrolase</keyword>
<keyword id="KW-0479">Metal-binding</keyword>
<keyword id="KW-0533">Nickel</keyword>
<keyword id="KW-1185">Reference proteome</keyword>
<comment type="catalytic activity">
    <reaction evidence="1">
        <text>urea + 2 H2O + H(+) = hydrogencarbonate + 2 NH4(+)</text>
        <dbReference type="Rhea" id="RHEA:20557"/>
        <dbReference type="ChEBI" id="CHEBI:15377"/>
        <dbReference type="ChEBI" id="CHEBI:15378"/>
        <dbReference type="ChEBI" id="CHEBI:16199"/>
        <dbReference type="ChEBI" id="CHEBI:17544"/>
        <dbReference type="ChEBI" id="CHEBI:28938"/>
        <dbReference type="EC" id="3.5.1.5"/>
    </reaction>
</comment>
<comment type="cofactor">
    <cofactor evidence="1">
        <name>Ni cation</name>
        <dbReference type="ChEBI" id="CHEBI:25516"/>
    </cofactor>
    <text evidence="1">Binds 2 nickel ions per subunit.</text>
</comment>
<comment type="pathway">
    <text evidence="1">Nitrogen metabolism; urea degradation; CO(2) and NH(3) from urea (urease route): step 1/1.</text>
</comment>
<comment type="subunit">
    <text evidence="1">Heterotrimer of UreA (gamma), UreB (beta) and UreC (alpha) subunits. Three heterotrimers associate to form the active enzyme.</text>
</comment>
<comment type="subcellular location">
    <subcellularLocation>
        <location evidence="1">Cytoplasm</location>
    </subcellularLocation>
</comment>
<comment type="PTM">
    <text evidence="1">Carboxylation allows a single lysine to coordinate two nickel ions.</text>
</comment>
<comment type="similarity">
    <text evidence="1">Belongs to the metallo-dependent hydrolases superfamily. Urease alpha subunit family.</text>
</comment>
<accession>Q0RQS0</accession>
<name>URE1_FRAAA</name>
<protein>
    <recommendedName>
        <fullName evidence="1">Urease subunit alpha</fullName>
        <ecNumber evidence="1">3.5.1.5</ecNumber>
    </recommendedName>
    <alternativeName>
        <fullName evidence="1">Urea amidohydrolase subunit alpha</fullName>
    </alternativeName>
</protein>
<organism>
    <name type="scientific">Frankia alni (strain DSM 45986 / CECT 9034 / ACN14a)</name>
    <dbReference type="NCBI Taxonomy" id="326424"/>
    <lineage>
        <taxon>Bacteria</taxon>
        <taxon>Bacillati</taxon>
        <taxon>Actinomycetota</taxon>
        <taxon>Actinomycetes</taxon>
        <taxon>Frankiales</taxon>
        <taxon>Frankiaceae</taxon>
        <taxon>Frankia</taxon>
    </lineage>
</organism>
<reference key="1">
    <citation type="journal article" date="2007" name="Genome Res.">
        <title>Genome characteristics of facultatively symbiotic Frankia sp. strains reflect host range and host plant biogeography.</title>
        <authorList>
            <person name="Normand P."/>
            <person name="Lapierre P."/>
            <person name="Tisa L.S."/>
            <person name="Gogarten J.P."/>
            <person name="Alloisio N."/>
            <person name="Bagnarol E."/>
            <person name="Bassi C.A."/>
            <person name="Berry A.M."/>
            <person name="Bickhart D.M."/>
            <person name="Choisne N."/>
            <person name="Couloux A."/>
            <person name="Cournoyer B."/>
            <person name="Cruveiller S."/>
            <person name="Daubin V."/>
            <person name="Demange N."/>
            <person name="Francino M.P."/>
            <person name="Goltsman E."/>
            <person name="Huang Y."/>
            <person name="Kopp O.R."/>
            <person name="Labarre L."/>
            <person name="Lapidus A."/>
            <person name="Lavire C."/>
            <person name="Marechal J."/>
            <person name="Martinez M."/>
            <person name="Mastronunzio J.E."/>
            <person name="Mullin B.C."/>
            <person name="Niemann J."/>
            <person name="Pujic P."/>
            <person name="Rawnsley T."/>
            <person name="Rouy Z."/>
            <person name="Schenowitz C."/>
            <person name="Sellstedt A."/>
            <person name="Tavares F."/>
            <person name="Tomkins J.P."/>
            <person name="Vallenet D."/>
            <person name="Valverde C."/>
            <person name="Wall L.G."/>
            <person name="Wang Y."/>
            <person name="Medigue C."/>
            <person name="Benson D.R."/>
        </authorList>
    </citation>
    <scope>NUCLEOTIDE SEQUENCE [LARGE SCALE GENOMIC DNA]</scope>
    <source>
        <strain>DSM 45986 / CECT 9034 / ACN14a</strain>
    </source>
</reference>
<sequence length="575" mass="60191">MSRLDRSRYASLYGPTVGDRIRLADTDLFIEVTEDRSRGPGLAGSGDEAVFGGGKVIRESMGQSRATRAQGAPDLVITGAVVLDHWGVIKADVGIRDGRIVALGKAGNPDTMDGVHPDLVIGPGTEIIAGNGKILTAGAVDCHVHLICPQQVPEALGAGITTLIGGGTGPAEGTKATTVTPGSWNLARMLSAMDDWPVNIVLLGKGNTVNDESMWEQLRAGAAGFKLHEDWGTTPAAIDACLRVADAAGVQVALHSDTLNEAGFVEDTLAAIAGRAIHAYHTEGAGGGHAPDIITVAAAANVLPSSTNPTRPHTVNTLDEHLDMLMVCHHLNPSVPEDLAFAESRIRPSTIAAEDILHDLGAISMIGSDSQAMGRIGEVVLRTWQTAHVMKRRRGALPGDGPADNARARRYVAKYTICPAVAHGLDAQIGSVEPGKLADLVVYDPAFFGVRPSLVLKGGFVAWAAMGDANASIPTPQPVLPRPMWGAARGPAAASSLTFVSPAAISDGLPERLGLATPVVPVEDVRRRGKADLPENTATPDIRVDPDTFTVSIDGEAVEADPVRELPMAQRYFLF</sequence>
<dbReference type="EC" id="3.5.1.5" evidence="1"/>
<dbReference type="EMBL" id="CT573213">
    <property type="protein sequence ID" value="CAJ60103.1"/>
    <property type="molecule type" value="Genomic_DNA"/>
</dbReference>
<dbReference type="RefSeq" id="WP_011602637.1">
    <property type="nucleotide sequence ID" value="NC_008278.1"/>
</dbReference>
<dbReference type="SMR" id="Q0RQS0"/>
<dbReference type="STRING" id="326424.FRAAL1447"/>
<dbReference type="MEROPS" id="M38.982"/>
<dbReference type="KEGG" id="fal:FRAAL1447"/>
<dbReference type="eggNOG" id="COG0804">
    <property type="taxonomic scope" value="Bacteria"/>
</dbReference>
<dbReference type="HOGENOM" id="CLU_000980_0_0_11"/>
<dbReference type="OrthoDB" id="9802793at2"/>
<dbReference type="UniPathway" id="UPA00258">
    <property type="reaction ID" value="UER00370"/>
</dbReference>
<dbReference type="Proteomes" id="UP000000657">
    <property type="component" value="Chromosome"/>
</dbReference>
<dbReference type="GO" id="GO:0005737">
    <property type="term" value="C:cytoplasm"/>
    <property type="evidence" value="ECO:0007669"/>
    <property type="project" value="UniProtKB-SubCell"/>
</dbReference>
<dbReference type="GO" id="GO:0016151">
    <property type="term" value="F:nickel cation binding"/>
    <property type="evidence" value="ECO:0007669"/>
    <property type="project" value="UniProtKB-UniRule"/>
</dbReference>
<dbReference type="GO" id="GO:0009039">
    <property type="term" value="F:urease activity"/>
    <property type="evidence" value="ECO:0007669"/>
    <property type="project" value="UniProtKB-UniRule"/>
</dbReference>
<dbReference type="GO" id="GO:0043419">
    <property type="term" value="P:urea catabolic process"/>
    <property type="evidence" value="ECO:0007669"/>
    <property type="project" value="UniProtKB-UniRule"/>
</dbReference>
<dbReference type="CDD" id="cd00375">
    <property type="entry name" value="Urease_alpha"/>
    <property type="match status" value="1"/>
</dbReference>
<dbReference type="Gene3D" id="3.20.20.140">
    <property type="entry name" value="Metal-dependent hydrolases"/>
    <property type="match status" value="1"/>
</dbReference>
<dbReference type="Gene3D" id="2.30.40.10">
    <property type="entry name" value="Urease, subunit C, domain 1"/>
    <property type="match status" value="1"/>
</dbReference>
<dbReference type="HAMAP" id="MF_01953">
    <property type="entry name" value="Urease_alpha"/>
    <property type="match status" value="1"/>
</dbReference>
<dbReference type="InterPro" id="IPR006680">
    <property type="entry name" value="Amidohydro-rel"/>
</dbReference>
<dbReference type="InterPro" id="IPR011059">
    <property type="entry name" value="Metal-dep_hydrolase_composite"/>
</dbReference>
<dbReference type="InterPro" id="IPR032466">
    <property type="entry name" value="Metal_Hydrolase"/>
</dbReference>
<dbReference type="InterPro" id="IPR011612">
    <property type="entry name" value="Urease_alpha_N_dom"/>
</dbReference>
<dbReference type="InterPro" id="IPR050112">
    <property type="entry name" value="Urease_alpha_subunit"/>
</dbReference>
<dbReference type="InterPro" id="IPR017950">
    <property type="entry name" value="Urease_AS"/>
</dbReference>
<dbReference type="InterPro" id="IPR005848">
    <property type="entry name" value="Urease_asu"/>
</dbReference>
<dbReference type="InterPro" id="IPR017951">
    <property type="entry name" value="Urease_asu_c"/>
</dbReference>
<dbReference type="InterPro" id="IPR029754">
    <property type="entry name" value="Urease_Ni-bd"/>
</dbReference>
<dbReference type="NCBIfam" id="NF009685">
    <property type="entry name" value="PRK13206.1"/>
    <property type="match status" value="1"/>
</dbReference>
<dbReference type="NCBIfam" id="NF009686">
    <property type="entry name" value="PRK13207.1"/>
    <property type="match status" value="1"/>
</dbReference>
<dbReference type="NCBIfam" id="TIGR01792">
    <property type="entry name" value="urease_alph"/>
    <property type="match status" value="1"/>
</dbReference>
<dbReference type="PANTHER" id="PTHR43440">
    <property type="entry name" value="UREASE"/>
    <property type="match status" value="1"/>
</dbReference>
<dbReference type="PANTHER" id="PTHR43440:SF1">
    <property type="entry name" value="UREASE"/>
    <property type="match status" value="1"/>
</dbReference>
<dbReference type="Pfam" id="PF01979">
    <property type="entry name" value="Amidohydro_1"/>
    <property type="match status" value="1"/>
</dbReference>
<dbReference type="Pfam" id="PF00449">
    <property type="entry name" value="Urease_alpha"/>
    <property type="match status" value="1"/>
</dbReference>
<dbReference type="PRINTS" id="PR01752">
    <property type="entry name" value="UREASE"/>
</dbReference>
<dbReference type="SUPFAM" id="SSF51338">
    <property type="entry name" value="Composite domain of metallo-dependent hydrolases"/>
    <property type="match status" value="2"/>
</dbReference>
<dbReference type="SUPFAM" id="SSF51556">
    <property type="entry name" value="Metallo-dependent hydrolases"/>
    <property type="match status" value="1"/>
</dbReference>
<dbReference type="PROSITE" id="PS01120">
    <property type="entry name" value="UREASE_1"/>
    <property type="match status" value="1"/>
</dbReference>
<dbReference type="PROSITE" id="PS00145">
    <property type="entry name" value="UREASE_2"/>
    <property type="match status" value="1"/>
</dbReference>
<dbReference type="PROSITE" id="PS51368">
    <property type="entry name" value="UREASE_3"/>
    <property type="match status" value="1"/>
</dbReference>
<feature type="chain" id="PRO_1000070657" description="Urease subunit alpha">
    <location>
        <begin position="1"/>
        <end position="575"/>
    </location>
</feature>
<feature type="domain" description="Urease" evidence="1">
    <location>
        <begin position="138"/>
        <end position="575"/>
    </location>
</feature>
<feature type="active site" description="Proton donor" evidence="1">
    <location>
        <position position="329"/>
    </location>
</feature>
<feature type="binding site" evidence="1">
    <location>
        <position position="143"/>
    </location>
    <ligand>
        <name>Ni(2+)</name>
        <dbReference type="ChEBI" id="CHEBI:49786"/>
        <label>1</label>
    </ligand>
</feature>
<feature type="binding site" evidence="1">
    <location>
        <position position="145"/>
    </location>
    <ligand>
        <name>Ni(2+)</name>
        <dbReference type="ChEBI" id="CHEBI:49786"/>
        <label>1</label>
    </ligand>
</feature>
<feature type="binding site" description="via carbamate group" evidence="1">
    <location>
        <position position="226"/>
    </location>
    <ligand>
        <name>Ni(2+)</name>
        <dbReference type="ChEBI" id="CHEBI:49786"/>
        <label>1</label>
    </ligand>
</feature>
<feature type="binding site" description="via carbamate group" evidence="1">
    <location>
        <position position="226"/>
    </location>
    <ligand>
        <name>Ni(2+)</name>
        <dbReference type="ChEBI" id="CHEBI:49786"/>
        <label>2</label>
    </ligand>
</feature>
<feature type="binding site" evidence="1">
    <location>
        <position position="228"/>
    </location>
    <ligand>
        <name>substrate</name>
    </ligand>
</feature>
<feature type="binding site" evidence="1">
    <location>
        <position position="255"/>
    </location>
    <ligand>
        <name>Ni(2+)</name>
        <dbReference type="ChEBI" id="CHEBI:49786"/>
        <label>2</label>
    </ligand>
</feature>
<feature type="binding site" evidence="1">
    <location>
        <position position="281"/>
    </location>
    <ligand>
        <name>Ni(2+)</name>
        <dbReference type="ChEBI" id="CHEBI:49786"/>
        <label>2</label>
    </ligand>
</feature>
<feature type="binding site" evidence="1">
    <location>
        <position position="369"/>
    </location>
    <ligand>
        <name>Ni(2+)</name>
        <dbReference type="ChEBI" id="CHEBI:49786"/>
        <label>1</label>
    </ligand>
</feature>
<feature type="modified residue" description="N6-carboxylysine" evidence="1">
    <location>
        <position position="226"/>
    </location>
</feature>